<name>SNL1_YEAST</name>
<protein>
    <recommendedName>
        <fullName>HSP70 co-chaperone SNL1</fullName>
    </recommendedName>
    <alternativeName>
        <fullName>Suppressor of NUP116-C lethal</fullName>
    </alternativeName>
</protein>
<gene>
    <name type="primary">SNL1</name>
    <name type="ordered locus">YIL016W</name>
</gene>
<feature type="chain" id="PRO_0000088881" description="HSP70 co-chaperone SNL1">
    <location>
        <begin position="1"/>
        <end position="159"/>
    </location>
</feature>
<feature type="topological domain" description="Perinuclear space">
    <location>
        <begin position="1"/>
        <end position="12"/>
    </location>
</feature>
<feature type="transmembrane region" description="Helical; Signal-anchor for type II membrane protein" evidence="1">
    <location>
        <begin position="13"/>
        <end position="35"/>
    </location>
</feature>
<feature type="topological domain" description="Cytoplasmic">
    <location>
        <begin position="36"/>
        <end position="159"/>
    </location>
</feature>
<feature type="domain" description="BAG" evidence="2">
    <location>
        <begin position="73"/>
        <end position="159"/>
    </location>
</feature>
<feature type="region of interest" description="Disordered" evidence="3">
    <location>
        <begin position="39"/>
        <end position="64"/>
    </location>
</feature>
<feature type="compositionally biased region" description="Basic residues" evidence="3">
    <location>
        <begin position="44"/>
        <end position="58"/>
    </location>
</feature>
<feature type="mutagenesis site" description="Strongly reduces interaction with HSP70 family members." evidence="4">
    <original>E</original>
    <variation>A</variation>
    <location>
        <position position="112"/>
    </location>
</feature>
<feature type="mutagenesis site" description="Strongly reduces interaction with HSP70 family members." evidence="4">
    <original>R</original>
    <variation>A</variation>
    <location>
        <position position="141"/>
    </location>
</feature>
<sequence length="159" mass="18306">MSHNAMEHWKSKLSKTSTSTYVLLAVIAVVFLVTIRRPNGSKGKSSKKRASKKNKKGKNQFEKAPVPLTLEEQIDNVSLRYGNELEGRSKDLINRFDVEDEKDIYERNYCNEMLLKLLIELDSIDLINVDESLRRPLKEKRKGVIKEIQAMLKSLDSLK</sequence>
<comment type="function">
    <text evidence="4 6">Stimulator of ATPase activity of molecular chaperones of the HSP70 family (principally of the SSA class). Stimulation is important for HSP70-substrate complex dissociation after folding of newly synthesized or refolded proteins. SNL1 is probably involved in nuclear pore biogenesis and in particular the folding or refolding of misfolded NUP116, GLE2 and NIC96.</text>
</comment>
<comment type="subunit">
    <text evidence="4">Interacts with the HSP70 family members SSA1, SSA4, and SSB1. These interactions are strongly reduced by ADP and ATP.</text>
</comment>
<comment type="subcellular location">
    <subcellularLocation>
        <location evidence="6">Endoplasmic reticulum membrane</location>
        <topology evidence="6">Single-pass type II membrane protein</topology>
    </subcellularLocation>
    <subcellularLocation>
        <location evidence="6">Nucleus membrane</location>
        <topology evidence="6">Single-pass type II membrane protein</topology>
    </subcellularLocation>
</comment>
<comment type="miscellaneous">
    <text evidence="5">Present with 3346 molecules/cell in log phase SD medium.</text>
</comment>
<accession>P40548</accession>
<accession>D6VVR3</accession>
<evidence type="ECO:0000255" key="1"/>
<evidence type="ECO:0000255" key="2">
    <source>
        <dbReference type="PROSITE-ProRule" id="PRU00369"/>
    </source>
</evidence>
<evidence type="ECO:0000256" key="3">
    <source>
        <dbReference type="SAM" id="MobiDB-lite"/>
    </source>
</evidence>
<evidence type="ECO:0000269" key="4">
    <source>
    </source>
</evidence>
<evidence type="ECO:0000269" key="5">
    <source>
    </source>
</evidence>
<evidence type="ECO:0000269" key="6">
    <source>
    </source>
</evidence>
<keyword id="KW-0143">Chaperone</keyword>
<keyword id="KW-0256">Endoplasmic reticulum</keyword>
<keyword id="KW-0472">Membrane</keyword>
<keyword id="KW-0539">Nucleus</keyword>
<keyword id="KW-1185">Reference proteome</keyword>
<keyword id="KW-0735">Signal-anchor</keyword>
<keyword id="KW-0812">Transmembrane</keyword>
<keyword id="KW-1133">Transmembrane helix</keyword>
<dbReference type="EMBL" id="Z46881">
    <property type="protein sequence ID" value="CAA86976.1"/>
    <property type="molecule type" value="Genomic_DNA"/>
</dbReference>
<dbReference type="EMBL" id="AY558552">
    <property type="protein sequence ID" value="AAS56878.1"/>
    <property type="molecule type" value="Genomic_DNA"/>
</dbReference>
<dbReference type="EMBL" id="BK006942">
    <property type="protein sequence ID" value="DAA08529.1"/>
    <property type="molecule type" value="Genomic_DNA"/>
</dbReference>
<dbReference type="PIR" id="S49966">
    <property type="entry name" value="S49966"/>
</dbReference>
<dbReference type="RefSeq" id="NP_012248.1">
    <property type="nucleotide sequence ID" value="NM_001179366.1"/>
</dbReference>
<dbReference type="SMR" id="P40548"/>
<dbReference type="BioGRID" id="34972">
    <property type="interactions" value="229"/>
</dbReference>
<dbReference type="DIP" id="DIP-5636N"/>
<dbReference type="FunCoup" id="P40548">
    <property type="interactions" value="269"/>
</dbReference>
<dbReference type="IntAct" id="P40548">
    <property type="interactions" value="62"/>
</dbReference>
<dbReference type="MINT" id="P40548"/>
<dbReference type="STRING" id="4932.YIL016W"/>
<dbReference type="TCDB" id="1.I.1.1.1">
    <property type="family name" value="the nuclear pore complex (npc) family"/>
</dbReference>
<dbReference type="iPTMnet" id="P40548"/>
<dbReference type="PaxDb" id="4932-YIL016W"/>
<dbReference type="PeptideAtlas" id="P40548"/>
<dbReference type="EnsemblFungi" id="YIL016W_mRNA">
    <property type="protein sequence ID" value="YIL016W"/>
    <property type="gene ID" value="YIL016W"/>
</dbReference>
<dbReference type="GeneID" id="854796"/>
<dbReference type="KEGG" id="sce:YIL016W"/>
<dbReference type="AGR" id="SGD:S000001278"/>
<dbReference type="SGD" id="S000001278">
    <property type="gene designation" value="SNL1"/>
</dbReference>
<dbReference type="VEuPathDB" id="FungiDB:YIL016W"/>
<dbReference type="eggNOG" id="ENOG502S72Q">
    <property type="taxonomic scope" value="Eukaryota"/>
</dbReference>
<dbReference type="HOGENOM" id="CLU_112518_0_0_1"/>
<dbReference type="InParanoid" id="P40548"/>
<dbReference type="OMA" id="VYERNYC"/>
<dbReference type="OrthoDB" id="417450at2759"/>
<dbReference type="BioCyc" id="YEAST:G3O-31292-MONOMER"/>
<dbReference type="BioGRID-ORCS" id="854796">
    <property type="hits" value="4 hits in 10 CRISPR screens"/>
</dbReference>
<dbReference type="PRO" id="PR:P40548"/>
<dbReference type="Proteomes" id="UP000002311">
    <property type="component" value="Chromosome IX"/>
</dbReference>
<dbReference type="RNAct" id="P40548">
    <property type="molecule type" value="protein"/>
</dbReference>
<dbReference type="GO" id="GO:0005789">
    <property type="term" value="C:endoplasmic reticulum membrane"/>
    <property type="evidence" value="ECO:0000314"/>
    <property type="project" value="SGD"/>
</dbReference>
<dbReference type="GO" id="GO:0005739">
    <property type="term" value="C:mitochondrion"/>
    <property type="evidence" value="ECO:0007005"/>
    <property type="project" value="SGD"/>
</dbReference>
<dbReference type="GO" id="GO:0005635">
    <property type="term" value="C:nuclear envelope"/>
    <property type="evidence" value="ECO:0000314"/>
    <property type="project" value="SGD"/>
</dbReference>
<dbReference type="GO" id="GO:0031965">
    <property type="term" value="C:nuclear membrane"/>
    <property type="evidence" value="ECO:0007669"/>
    <property type="project" value="UniProtKB-SubCell"/>
</dbReference>
<dbReference type="GO" id="GO:0051087">
    <property type="term" value="F:protein-folding chaperone binding"/>
    <property type="evidence" value="ECO:0007669"/>
    <property type="project" value="InterPro"/>
</dbReference>
<dbReference type="GO" id="GO:0043022">
    <property type="term" value="F:ribosome binding"/>
    <property type="evidence" value="ECO:0000314"/>
    <property type="project" value="SGD"/>
</dbReference>
<dbReference type="GO" id="GO:0006999">
    <property type="term" value="P:nuclear pore organization"/>
    <property type="evidence" value="ECO:0000316"/>
    <property type="project" value="SGD"/>
</dbReference>
<dbReference type="GO" id="GO:0006457">
    <property type="term" value="P:protein folding"/>
    <property type="evidence" value="ECO:0000353"/>
    <property type="project" value="SGD"/>
</dbReference>
<dbReference type="Gene3D" id="1.20.58.120">
    <property type="entry name" value="BAG domain"/>
    <property type="match status" value="1"/>
</dbReference>
<dbReference type="InterPro" id="IPR036533">
    <property type="entry name" value="BAG_dom_sf"/>
</dbReference>
<dbReference type="InterPro" id="IPR003103">
    <property type="entry name" value="BAG_domain"/>
</dbReference>
<dbReference type="Pfam" id="PF02179">
    <property type="entry name" value="BAG"/>
    <property type="match status" value="1"/>
</dbReference>
<dbReference type="SMART" id="SM00264">
    <property type="entry name" value="BAG"/>
    <property type="match status" value="1"/>
</dbReference>
<dbReference type="SUPFAM" id="SSF63491">
    <property type="entry name" value="BAG domain"/>
    <property type="match status" value="1"/>
</dbReference>
<dbReference type="PROSITE" id="PS51035">
    <property type="entry name" value="BAG"/>
    <property type="match status" value="1"/>
</dbReference>
<proteinExistence type="evidence at protein level"/>
<reference key="1">
    <citation type="journal article" date="1997" name="Nature">
        <title>The nucleotide sequence of Saccharomyces cerevisiae chromosome IX.</title>
        <authorList>
            <person name="Churcher C.M."/>
            <person name="Bowman S."/>
            <person name="Badcock K."/>
            <person name="Bankier A.T."/>
            <person name="Brown D."/>
            <person name="Chillingworth T."/>
            <person name="Connor R."/>
            <person name="Devlin K."/>
            <person name="Gentles S."/>
            <person name="Hamlin N."/>
            <person name="Harris D.E."/>
            <person name="Horsnell T."/>
            <person name="Hunt S."/>
            <person name="Jagels K."/>
            <person name="Jones M."/>
            <person name="Lye G."/>
            <person name="Moule S."/>
            <person name="Odell C."/>
            <person name="Pearson D."/>
            <person name="Rajandream M.A."/>
            <person name="Rice P."/>
            <person name="Rowley N."/>
            <person name="Skelton J."/>
            <person name="Smith V."/>
            <person name="Walsh S.V."/>
            <person name="Whitehead S."/>
            <person name="Barrell B.G."/>
        </authorList>
    </citation>
    <scope>NUCLEOTIDE SEQUENCE [LARGE SCALE GENOMIC DNA]</scope>
    <source>
        <strain>ATCC 204508 / S288c</strain>
    </source>
</reference>
<reference key="2">
    <citation type="journal article" date="2014" name="G3 (Bethesda)">
        <title>The reference genome sequence of Saccharomyces cerevisiae: Then and now.</title>
        <authorList>
            <person name="Engel S.R."/>
            <person name="Dietrich F.S."/>
            <person name="Fisk D.G."/>
            <person name="Binkley G."/>
            <person name="Balakrishnan R."/>
            <person name="Costanzo M.C."/>
            <person name="Dwight S.S."/>
            <person name="Hitz B.C."/>
            <person name="Karra K."/>
            <person name="Nash R.S."/>
            <person name="Weng S."/>
            <person name="Wong E.D."/>
            <person name="Lloyd P."/>
            <person name="Skrzypek M.S."/>
            <person name="Miyasato S.R."/>
            <person name="Simison M."/>
            <person name="Cherry J.M."/>
        </authorList>
    </citation>
    <scope>GENOME REANNOTATION</scope>
    <source>
        <strain>ATCC 204508 / S288c</strain>
    </source>
</reference>
<reference key="3">
    <citation type="journal article" date="2007" name="Genome Res.">
        <title>Approaching a complete repository of sequence-verified protein-encoding clones for Saccharomyces cerevisiae.</title>
        <authorList>
            <person name="Hu Y."/>
            <person name="Rolfs A."/>
            <person name="Bhullar B."/>
            <person name="Murthy T.V.S."/>
            <person name="Zhu C."/>
            <person name="Berger M.F."/>
            <person name="Camargo A.A."/>
            <person name="Kelley F."/>
            <person name="McCarron S."/>
            <person name="Jepson D."/>
            <person name="Richardson A."/>
            <person name="Raphael J."/>
            <person name="Moreira D."/>
            <person name="Taycher E."/>
            <person name="Zuo D."/>
            <person name="Mohr S."/>
            <person name="Kane M.F."/>
            <person name="Williamson J."/>
            <person name="Simpson A.J.G."/>
            <person name="Bulyk M.L."/>
            <person name="Harlow E."/>
            <person name="Marsischky G."/>
            <person name="Kolodner R.D."/>
            <person name="LaBaer J."/>
        </authorList>
    </citation>
    <scope>NUCLEOTIDE SEQUENCE [GENOMIC DNA]</scope>
    <source>
        <strain>ATCC 204508 / S288c</strain>
    </source>
</reference>
<reference key="4">
    <citation type="journal article" date="1998" name="Mol. Biol. Cell">
        <title>The integral membrane protein snl1p is genetically linked to yeast nuclear pore complex function.</title>
        <authorList>
            <person name="Ho A.K."/>
            <person name="Raczniak G.A."/>
            <person name="Ives E.B."/>
            <person name="Wente S.R."/>
        </authorList>
    </citation>
    <scope>FUNCTION</scope>
    <scope>SUBCELLULAR LOCATION</scope>
    <scope>NUCLEAR PORE ASSEMBLY</scope>
</reference>
<reference key="5">
    <citation type="journal article" date="2002" name="J. Biol. Chem.">
        <title>Prediction of novel Bag-1 homologs based on structure/function analysis identifies Snl1p as an Hsp70 co-chaperone in Saccharomyces cerevisiae.</title>
        <authorList>
            <person name="Sondermann H."/>
            <person name="Ho A.K."/>
            <person name="Listenberger L.L."/>
            <person name="Siegers K."/>
            <person name="Moarefi I."/>
            <person name="Wente S.R."/>
            <person name="Hartl F.-U."/>
            <person name="Young J.C."/>
        </authorList>
    </citation>
    <scope>FUNCTION</scope>
    <scope>INTERACTION WITH SSA1; SSA4 AND SSB1</scope>
    <scope>HSP70 CO-CHAPERONE ACTIVITY</scope>
    <scope>MUTAGENESIS OF GLU-112 AND ARG-141</scope>
</reference>
<reference key="6">
    <citation type="journal article" date="2003" name="Nature">
        <title>Global analysis of protein expression in yeast.</title>
        <authorList>
            <person name="Ghaemmaghami S."/>
            <person name="Huh W.-K."/>
            <person name="Bower K."/>
            <person name="Howson R.W."/>
            <person name="Belle A."/>
            <person name="Dephoure N."/>
            <person name="O'Shea E.K."/>
            <person name="Weissman J.S."/>
        </authorList>
    </citation>
    <scope>LEVEL OF PROTEIN EXPRESSION [LARGE SCALE ANALYSIS]</scope>
</reference>
<organism>
    <name type="scientific">Saccharomyces cerevisiae (strain ATCC 204508 / S288c)</name>
    <name type="common">Baker's yeast</name>
    <dbReference type="NCBI Taxonomy" id="559292"/>
    <lineage>
        <taxon>Eukaryota</taxon>
        <taxon>Fungi</taxon>
        <taxon>Dikarya</taxon>
        <taxon>Ascomycota</taxon>
        <taxon>Saccharomycotina</taxon>
        <taxon>Saccharomycetes</taxon>
        <taxon>Saccharomycetales</taxon>
        <taxon>Saccharomycetaceae</taxon>
        <taxon>Saccharomyces</taxon>
    </lineage>
</organism>